<name>RL30_SHEDO</name>
<reference key="1">
    <citation type="submission" date="2006-03" db="EMBL/GenBank/DDBJ databases">
        <title>Complete sequence of Shewanella denitrificans OS217.</title>
        <authorList>
            <consortium name="US DOE Joint Genome Institute"/>
            <person name="Copeland A."/>
            <person name="Lucas S."/>
            <person name="Lapidus A."/>
            <person name="Barry K."/>
            <person name="Detter J.C."/>
            <person name="Glavina del Rio T."/>
            <person name="Hammon N."/>
            <person name="Israni S."/>
            <person name="Dalin E."/>
            <person name="Tice H."/>
            <person name="Pitluck S."/>
            <person name="Brettin T."/>
            <person name="Bruce D."/>
            <person name="Han C."/>
            <person name="Tapia R."/>
            <person name="Gilna P."/>
            <person name="Kiss H."/>
            <person name="Schmutz J."/>
            <person name="Larimer F."/>
            <person name="Land M."/>
            <person name="Hauser L."/>
            <person name="Kyrpides N."/>
            <person name="Lykidis A."/>
            <person name="Richardson P."/>
        </authorList>
    </citation>
    <scope>NUCLEOTIDE SEQUENCE [LARGE SCALE GENOMIC DNA]</scope>
    <source>
        <strain>OS217 / ATCC BAA-1090 / DSM 15013</strain>
    </source>
</reference>
<feature type="chain" id="PRO_0000273849" description="Large ribosomal subunit protein uL30">
    <location>
        <begin position="1"/>
        <end position="60"/>
    </location>
</feature>
<sequence length="60" mass="6598">MATKTLKVTQTKSGIGRLPKHRATLTGLGLRRIGHTVELEDTPSVRGMINKVYYMVSVEG</sequence>
<evidence type="ECO:0000255" key="1">
    <source>
        <dbReference type="HAMAP-Rule" id="MF_01371"/>
    </source>
</evidence>
<evidence type="ECO:0000305" key="2"/>
<protein>
    <recommendedName>
        <fullName evidence="1">Large ribosomal subunit protein uL30</fullName>
    </recommendedName>
    <alternativeName>
        <fullName evidence="2">50S ribosomal protein L30</fullName>
    </alternativeName>
</protein>
<gene>
    <name evidence="1" type="primary">rpmD</name>
    <name type="ordered locus">Sden_0188</name>
</gene>
<keyword id="KW-1185">Reference proteome</keyword>
<keyword id="KW-0687">Ribonucleoprotein</keyword>
<keyword id="KW-0689">Ribosomal protein</keyword>
<proteinExistence type="inferred from homology"/>
<organism>
    <name type="scientific">Shewanella denitrificans (strain OS217 / ATCC BAA-1090 / DSM 15013)</name>
    <dbReference type="NCBI Taxonomy" id="318161"/>
    <lineage>
        <taxon>Bacteria</taxon>
        <taxon>Pseudomonadati</taxon>
        <taxon>Pseudomonadota</taxon>
        <taxon>Gammaproteobacteria</taxon>
        <taxon>Alteromonadales</taxon>
        <taxon>Shewanellaceae</taxon>
        <taxon>Shewanella</taxon>
    </lineage>
</organism>
<accession>Q12SU1</accession>
<dbReference type="EMBL" id="CP000302">
    <property type="protein sequence ID" value="ABE53485.1"/>
    <property type="molecule type" value="Genomic_DNA"/>
</dbReference>
<dbReference type="RefSeq" id="WP_011494652.1">
    <property type="nucleotide sequence ID" value="NC_007954.1"/>
</dbReference>
<dbReference type="SMR" id="Q12SU1"/>
<dbReference type="STRING" id="318161.Sden_0188"/>
<dbReference type="KEGG" id="sdn:Sden_0188"/>
<dbReference type="eggNOG" id="COG1841">
    <property type="taxonomic scope" value="Bacteria"/>
</dbReference>
<dbReference type="HOGENOM" id="CLU_131047_1_4_6"/>
<dbReference type="OrthoDB" id="9812790at2"/>
<dbReference type="Proteomes" id="UP000001982">
    <property type="component" value="Chromosome"/>
</dbReference>
<dbReference type="GO" id="GO:0022625">
    <property type="term" value="C:cytosolic large ribosomal subunit"/>
    <property type="evidence" value="ECO:0007669"/>
    <property type="project" value="TreeGrafter"/>
</dbReference>
<dbReference type="GO" id="GO:0003735">
    <property type="term" value="F:structural constituent of ribosome"/>
    <property type="evidence" value="ECO:0007669"/>
    <property type="project" value="InterPro"/>
</dbReference>
<dbReference type="GO" id="GO:0006412">
    <property type="term" value="P:translation"/>
    <property type="evidence" value="ECO:0007669"/>
    <property type="project" value="UniProtKB-UniRule"/>
</dbReference>
<dbReference type="CDD" id="cd01658">
    <property type="entry name" value="Ribosomal_L30"/>
    <property type="match status" value="1"/>
</dbReference>
<dbReference type="FunFam" id="3.30.1390.20:FF:000001">
    <property type="entry name" value="50S ribosomal protein L30"/>
    <property type="match status" value="1"/>
</dbReference>
<dbReference type="Gene3D" id="3.30.1390.20">
    <property type="entry name" value="Ribosomal protein L30, ferredoxin-like fold domain"/>
    <property type="match status" value="1"/>
</dbReference>
<dbReference type="HAMAP" id="MF_01371_B">
    <property type="entry name" value="Ribosomal_uL30_B"/>
    <property type="match status" value="1"/>
</dbReference>
<dbReference type="InterPro" id="IPR036919">
    <property type="entry name" value="Ribo_uL30_ferredoxin-like_sf"/>
</dbReference>
<dbReference type="InterPro" id="IPR005996">
    <property type="entry name" value="Ribosomal_uL30_bac-type"/>
</dbReference>
<dbReference type="InterPro" id="IPR018038">
    <property type="entry name" value="Ribosomal_uL30_CS"/>
</dbReference>
<dbReference type="InterPro" id="IPR016082">
    <property type="entry name" value="Ribosomal_uL30_ferredoxin-like"/>
</dbReference>
<dbReference type="NCBIfam" id="TIGR01308">
    <property type="entry name" value="rpmD_bact"/>
    <property type="match status" value="1"/>
</dbReference>
<dbReference type="PANTHER" id="PTHR15892:SF2">
    <property type="entry name" value="LARGE RIBOSOMAL SUBUNIT PROTEIN UL30M"/>
    <property type="match status" value="1"/>
</dbReference>
<dbReference type="PANTHER" id="PTHR15892">
    <property type="entry name" value="MITOCHONDRIAL RIBOSOMAL PROTEIN L30"/>
    <property type="match status" value="1"/>
</dbReference>
<dbReference type="Pfam" id="PF00327">
    <property type="entry name" value="Ribosomal_L30"/>
    <property type="match status" value="1"/>
</dbReference>
<dbReference type="PIRSF" id="PIRSF002211">
    <property type="entry name" value="Ribosomal_L30_bac-type"/>
    <property type="match status" value="1"/>
</dbReference>
<dbReference type="SUPFAM" id="SSF55129">
    <property type="entry name" value="Ribosomal protein L30p/L7e"/>
    <property type="match status" value="1"/>
</dbReference>
<dbReference type="PROSITE" id="PS00634">
    <property type="entry name" value="RIBOSOMAL_L30"/>
    <property type="match status" value="1"/>
</dbReference>
<comment type="subunit">
    <text evidence="1">Part of the 50S ribosomal subunit.</text>
</comment>
<comment type="similarity">
    <text evidence="1">Belongs to the universal ribosomal protein uL30 family.</text>
</comment>